<accession>O35458</accession>
<evidence type="ECO:0000250" key="1">
    <source>
        <dbReference type="UniProtKB" id="O35633"/>
    </source>
</evidence>
<evidence type="ECO:0000255" key="2"/>
<evidence type="ECO:0000269" key="3">
    <source>
    </source>
</evidence>
<evidence type="ECO:0000269" key="4">
    <source>
    </source>
</evidence>
<evidence type="ECO:0000269" key="5">
    <source>
    </source>
</evidence>
<evidence type="ECO:0000269" key="6">
    <source>
    </source>
</evidence>
<evidence type="ECO:0000269" key="7">
    <source>
    </source>
</evidence>
<evidence type="ECO:0000269" key="8">
    <source>
    </source>
</evidence>
<evidence type="ECO:0000303" key="9">
    <source>
    </source>
</evidence>
<evidence type="ECO:0000305" key="10"/>
<evidence type="ECO:0000305" key="11">
    <source>
    </source>
</evidence>
<evidence type="ECO:0000305" key="12">
    <source>
    </source>
</evidence>
<evidence type="ECO:0000312" key="13">
    <source>
        <dbReference type="RGD" id="621402"/>
    </source>
</evidence>
<gene>
    <name evidence="13" type="primary">Slc32a1</name>
    <name type="synonym">Vgat</name>
    <name type="synonym">Viaat</name>
</gene>
<feature type="chain" id="PRO_0000093823" description="Vesicular inhibitory amino acid transporter">
    <location>
        <begin position="1"/>
        <end position="525"/>
    </location>
</feature>
<feature type="topological domain" description="Cytoplasmic" evidence="11">
    <location>
        <begin position="1"/>
        <end position="132"/>
    </location>
</feature>
<feature type="transmembrane region" description="Helical" evidence="2">
    <location>
        <begin position="133"/>
        <end position="153"/>
    </location>
</feature>
<feature type="topological domain" description="Lumenal, vesicle" evidence="11">
    <location>
        <begin position="154"/>
        <end position="204"/>
    </location>
</feature>
<feature type="transmembrane region" description="Helical" evidence="2">
    <location>
        <begin position="205"/>
        <end position="225"/>
    </location>
</feature>
<feature type="topological domain" description="Cytoplasmic" evidence="11">
    <location>
        <begin position="226"/>
        <end position="265"/>
    </location>
</feature>
<feature type="transmembrane region" description="Helical" evidence="2">
    <location>
        <begin position="266"/>
        <end position="286"/>
    </location>
</feature>
<feature type="topological domain" description="Lumenal, vesicle" evidence="11">
    <location>
        <begin position="287"/>
        <end position="305"/>
    </location>
</feature>
<feature type="transmembrane region" description="Helical" evidence="2">
    <location>
        <begin position="306"/>
        <end position="326"/>
    </location>
</feature>
<feature type="topological domain" description="Cytoplasmic" evidence="11">
    <location>
        <begin position="327"/>
        <end position="341"/>
    </location>
</feature>
<feature type="transmembrane region" description="Helical" evidence="2">
    <location>
        <begin position="342"/>
        <end position="362"/>
    </location>
</feature>
<feature type="topological domain" description="Lumenal, vesicle" evidence="11">
    <location>
        <begin position="363"/>
        <end position="383"/>
    </location>
</feature>
<feature type="transmembrane region" description="Helical" evidence="2">
    <location>
        <begin position="384"/>
        <end position="404"/>
    </location>
</feature>
<feature type="topological domain" description="Cytoplasmic" evidence="11">
    <location>
        <begin position="405"/>
        <end position="438"/>
    </location>
</feature>
<feature type="transmembrane region" description="Helical" evidence="2">
    <location>
        <begin position="439"/>
        <end position="459"/>
    </location>
</feature>
<feature type="topological domain" description="Lumenal, vesicle" evidence="11">
    <location>
        <begin position="460"/>
        <end position="461"/>
    </location>
</feature>
<feature type="transmembrane region" description="Helical" evidence="2">
    <location>
        <begin position="462"/>
        <end position="482"/>
    </location>
</feature>
<feature type="topological domain" description="Cytoplasmic" evidence="11">
    <location>
        <begin position="483"/>
        <end position="489"/>
    </location>
</feature>
<feature type="transmembrane region" description="Helical" evidence="2">
    <location>
        <begin position="490"/>
        <end position="510"/>
    </location>
</feature>
<feature type="topological domain" description="Lumenal, vesicle" evidence="11">
    <location>
        <begin position="511"/>
        <end position="525"/>
    </location>
</feature>
<feature type="modified residue" description="3'-nitrotyrosine" evidence="1">
    <location>
        <position position="186"/>
    </location>
</feature>
<feature type="mutagenesis site" description="Loss of GABA and glycine transport activity. Loss of potential gradient-induced Cl(-) uptake. Loss of beta-alanine transport activity." evidence="5 6">
    <original>E</original>
    <variation>A</variation>
    <location>
        <position position="213"/>
    </location>
</feature>
<feature type="mutagenesis site" description="Retains around 80% of the beta-alanine transport activity." evidence="6">
    <original>K</original>
    <variation>A</variation>
    <location>
        <position position="351"/>
    </location>
</feature>
<protein>
    <recommendedName>
        <fullName>Vesicular inhibitory amino acid transporter</fullName>
    </recommendedName>
    <alternativeName>
        <fullName>GABA and glycine transporter</fullName>
    </alternativeName>
    <alternativeName>
        <fullName>Solute carrier family 32 member 1</fullName>
    </alternativeName>
    <alternativeName>
        <fullName evidence="9">Vesicular GABA transporter</fullName>
        <shortName>rGVAT</shortName>
    </alternativeName>
    <alternativeName>
        <fullName evidence="9">rat UNC-47 homolog</fullName>
        <shortName evidence="9">RUNC-47</shortName>
    </alternativeName>
</protein>
<name>VIAAT_RAT</name>
<proteinExistence type="evidence at protein level"/>
<dbReference type="EMBL" id="AF030253">
    <property type="protein sequence ID" value="AAB82950.1"/>
    <property type="molecule type" value="mRNA"/>
</dbReference>
<dbReference type="RefSeq" id="NP_113970.1">
    <property type="nucleotide sequence ID" value="NM_031782.2"/>
</dbReference>
<dbReference type="RefSeq" id="XP_006235503.1">
    <property type="nucleotide sequence ID" value="XM_006235441.3"/>
</dbReference>
<dbReference type="SMR" id="O35458"/>
<dbReference type="BioGRID" id="249777">
    <property type="interactions" value="2"/>
</dbReference>
<dbReference type="FunCoup" id="O35458">
    <property type="interactions" value="380"/>
</dbReference>
<dbReference type="IntAct" id="O35458">
    <property type="interactions" value="2"/>
</dbReference>
<dbReference type="MINT" id="O35458"/>
<dbReference type="STRING" id="10116.ENSRNOP00000020720"/>
<dbReference type="PhosphoSitePlus" id="O35458"/>
<dbReference type="SwissPalm" id="O35458"/>
<dbReference type="PaxDb" id="10116-ENSRNOP00000020720"/>
<dbReference type="ABCD" id="O35458">
    <property type="antibodies" value="2 sequenced antibodies"/>
</dbReference>
<dbReference type="Ensembl" id="ENSRNOT00000020720.7">
    <property type="protein sequence ID" value="ENSRNOP00000020720.5"/>
    <property type="gene ID" value="ENSRNOG00000015393.7"/>
</dbReference>
<dbReference type="GeneID" id="83612"/>
<dbReference type="KEGG" id="rno:83612"/>
<dbReference type="UCSC" id="RGD:621402">
    <property type="organism name" value="rat"/>
</dbReference>
<dbReference type="AGR" id="RGD:621402"/>
<dbReference type="CTD" id="140679"/>
<dbReference type="RGD" id="621402">
    <property type="gene designation" value="Slc32a1"/>
</dbReference>
<dbReference type="eggNOG" id="KOG4303">
    <property type="taxonomic scope" value="Eukaryota"/>
</dbReference>
<dbReference type="GeneTree" id="ENSGT00490000043380"/>
<dbReference type="HOGENOM" id="CLU_036432_0_0_1"/>
<dbReference type="InParanoid" id="O35458"/>
<dbReference type="OMA" id="MKWTHIA"/>
<dbReference type="OrthoDB" id="6021076at2759"/>
<dbReference type="PhylomeDB" id="O35458"/>
<dbReference type="TreeFam" id="TF312818"/>
<dbReference type="Reactome" id="R-RNO-425393">
    <property type="pathway name" value="Transport of inorganic cations/anions and amino acids/oligopeptides"/>
</dbReference>
<dbReference type="Reactome" id="R-RNO-888590">
    <property type="pathway name" value="GABA synthesis, release, reuptake and degradation"/>
</dbReference>
<dbReference type="PRO" id="PR:O35458"/>
<dbReference type="Proteomes" id="UP000002494">
    <property type="component" value="Chromosome 3"/>
</dbReference>
<dbReference type="Bgee" id="ENSRNOG00000015393">
    <property type="expression patterns" value="Expressed in cerebellum and 2 other cell types or tissues"/>
</dbReference>
<dbReference type="GO" id="GO:0009986">
    <property type="term" value="C:cell surface"/>
    <property type="evidence" value="ECO:0000266"/>
    <property type="project" value="RGD"/>
</dbReference>
<dbReference type="GO" id="GO:0051286">
    <property type="term" value="C:cell tip"/>
    <property type="evidence" value="ECO:0000266"/>
    <property type="project" value="RGD"/>
</dbReference>
<dbReference type="GO" id="GO:0044316">
    <property type="term" value="C:cone cell pedicle"/>
    <property type="evidence" value="ECO:0000266"/>
    <property type="project" value="RGD"/>
</dbReference>
<dbReference type="GO" id="GO:0030425">
    <property type="term" value="C:dendrite"/>
    <property type="evidence" value="ECO:0000266"/>
    <property type="project" value="RGD"/>
</dbReference>
<dbReference type="GO" id="GO:0044292">
    <property type="term" value="C:dendrite terminus"/>
    <property type="evidence" value="ECO:0000266"/>
    <property type="project" value="RGD"/>
</dbReference>
<dbReference type="GO" id="GO:0098982">
    <property type="term" value="C:GABA-ergic synapse"/>
    <property type="evidence" value="ECO:0000314"/>
    <property type="project" value="SynGO"/>
</dbReference>
<dbReference type="GO" id="GO:0060077">
    <property type="term" value="C:inhibitory synapse"/>
    <property type="evidence" value="ECO:0000314"/>
    <property type="project" value="BHF-UCL"/>
</dbReference>
<dbReference type="GO" id="GO:0043005">
    <property type="term" value="C:neuron projection"/>
    <property type="evidence" value="ECO:0000266"/>
    <property type="project" value="RGD"/>
</dbReference>
<dbReference type="GO" id="GO:0044306">
    <property type="term" value="C:neuron projection terminus"/>
    <property type="evidence" value="ECO:0000266"/>
    <property type="project" value="RGD"/>
</dbReference>
<dbReference type="GO" id="GO:0098793">
    <property type="term" value="C:presynapse"/>
    <property type="evidence" value="ECO:0000314"/>
    <property type="project" value="UniProtKB"/>
</dbReference>
<dbReference type="GO" id="GO:0048786">
    <property type="term" value="C:presynaptic active zone"/>
    <property type="evidence" value="ECO:0000266"/>
    <property type="project" value="RGD"/>
</dbReference>
<dbReference type="GO" id="GO:0045202">
    <property type="term" value="C:synapse"/>
    <property type="evidence" value="ECO:0000314"/>
    <property type="project" value="MGI"/>
</dbReference>
<dbReference type="GO" id="GO:0008021">
    <property type="term" value="C:synaptic vesicle"/>
    <property type="evidence" value="ECO:0000314"/>
    <property type="project" value="UniProtKB"/>
</dbReference>
<dbReference type="GO" id="GO:0030672">
    <property type="term" value="C:synaptic vesicle membrane"/>
    <property type="evidence" value="ECO:0000314"/>
    <property type="project" value="SynGO"/>
</dbReference>
<dbReference type="GO" id="GO:0022853">
    <property type="term" value="F:active monoatomic ion transmembrane transporter activity"/>
    <property type="evidence" value="ECO:0007669"/>
    <property type="project" value="UniProtKB-ARBA"/>
</dbReference>
<dbReference type="GO" id="GO:0015185">
    <property type="term" value="F:gamma-aminobutyric acid transmembrane transporter activity"/>
    <property type="evidence" value="ECO:0000315"/>
    <property type="project" value="UniProtKB"/>
</dbReference>
<dbReference type="GO" id="GO:0140800">
    <property type="term" value="F:gamma-aminobutyric acid:proton antiporter activity"/>
    <property type="evidence" value="ECO:0000314"/>
    <property type="project" value="UniProtKB"/>
</dbReference>
<dbReference type="GO" id="GO:0015187">
    <property type="term" value="F:glycine transmembrane transporter activity"/>
    <property type="evidence" value="ECO:0000315"/>
    <property type="project" value="UniProtKB"/>
</dbReference>
<dbReference type="GO" id="GO:0140799">
    <property type="term" value="F:glycine:proton antiporter activity"/>
    <property type="evidence" value="ECO:0000250"/>
    <property type="project" value="UniProtKB"/>
</dbReference>
<dbReference type="GO" id="GO:0001762">
    <property type="term" value="P:beta-alanine transport"/>
    <property type="evidence" value="ECO:0000314"/>
    <property type="project" value="UniProtKB"/>
</dbReference>
<dbReference type="GO" id="GO:0051939">
    <property type="term" value="P:gamma-aminobutyric acid import"/>
    <property type="evidence" value="ECO:0000315"/>
    <property type="project" value="UniProtKB"/>
</dbReference>
<dbReference type="GO" id="GO:0015812">
    <property type="term" value="P:gamma-aminobutyric acid transport"/>
    <property type="evidence" value="ECO:0000314"/>
    <property type="project" value="BHF-UCL"/>
</dbReference>
<dbReference type="GO" id="GO:0015816">
    <property type="term" value="P:glycine transport"/>
    <property type="evidence" value="ECO:0000315"/>
    <property type="project" value="UniProtKB"/>
</dbReference>
<dbReference type="GO" id="GO:0021766">
    <property type="term" value="P:hippocampus development"/>
    <property type="evidence" value="ECO:0000270"/>
    <property type="project" value="RGD"/>
</dbReference>
<dbReference type="GO" id="GO:0098700">
    <property type="term" value="P:neurotransmitter loading into synaptic vesicle"/>
    <property type="evidence" value="ECO:0000314"/>
    <property type="project" value="SynGO"/>
</dbReference>
<dbReference type="GO" id="GO:0006836">
    <property type="term" value="P:neurotransmitter transport"/>
    <property type="evidence" value="ECO:0000304"/>
    <property type="project" value="RGD"/>
</dbReference>
<dbReference type="FunFam" id="1.20.1740.10:FF:000062">
    <property type="entry name" value="Vesicular inhibitory amino acid transporter"/>
    <property type="match status" value="1"/>
</dbReference>
<dbReference type="InterPro" id="IPR013057">
    <property type="entry name" value="AA_transpt_TM"/>
</dbReference>
<dbReference type="PANTHER" id="PTHR22950">
    <property type="entry name" value="AMINO ACID TRANSPORTER"/>
    <property type="match status" value="1"/>
</dbReference>
<dbReference type="PANTHER" id="PTHR22950:SF689">
    <property type="entry name" value="VESICULAR INHIBITORY AMINO ACID TRANSPORTER"/>
    <property type="match status" value="1"/>
</dbReference>
<dbReference type="Pfam" id="PF01490">
    <property type="entry name" value="Aa_trans"/>
    <property type="match status" value="1"/>
</dbReference>
<reference key="1">
    <citation type="journal article" date="1997" name="Nature">
        <title>Identification and characterization of the vesicular GABA transporter.</title>
        <authorList>
            <person name="McIntire S.L."/>
            <person name="Reimer R.J."/>
            <person name="Schuske K."/>
            <person name="Edwards R.H."/>
            <person name="Jorgensen E.M."/>
        </authorList>
    </citation>
    <scope>NUCLEOTIDE SEQUENCE [MRNA]</scope>
    <scope>TISSUE SPECIFICITY</scope>
    <scope>FUNCTION</scope>
    <scope>TRANSPORTER ACTIVITY</scope>
    <scope>BIOPHYSICOCHEMICAL PROPERTIES</scope>
    <source>
        <strain>Sprague-Dawley</strain>
    </source>
</reference>
<reference key="2">
    <citation type="journal article" date="1998" name="J. Neurosci.">
        <title>The vesicular GABA transporter, VGAT, localizes to synaptic vesicles in sets of glycinergic as well as GABAergic neurons.</title>
        <authorList>
            <person name="Chaudhry F.A."/>
            <person name="Reimer R.J."/>
            <person name="Bellocchio E.E."/>
            <person name="Danbolt N.C."/>
            <person name="Osen K.K."/>
            <person name="Edwards R.H."/>
            <person name="Storm-Mathisen J."/>
        </authorList>
    </citation>
    <scope>SUBCELLULAR LOCATION</scope>
    <scope>TISSUE SPECIFICITY</scope>
</reference>
<reference key="3">
    <citation type="journal article" date="1999" name="J. Cell Sci.">
        <title>Presence of the vesicular inhibitory amino acid transporter in GABAergic and glycinergic synaptic terminal boutons.</title>
        <authorList>
            <person name="Dumoulin A."/>
            <person name="Rostaing P."/>
            <person name="Bedet C."/>
            <person name="Levi S."/>
            <person name="Isambert M.F."/>
            <person name="Henry J.P."/>
            <person name="Triller A."/>
            <person name="Gasnier B."/>
        </authorList>
    </citation>
    <scope>SUBCELLULAR LOCATION</scope>
</reference>
<reference key="4">
    <citation type="journal article" date="2002" name="Diabetes">
        <title>Expression of the vesicular inhibitory amino acid transporter in pancreatic islet cells: distribution of the transporter within rat islets.</title>
        <authorList>
            <person name="Chessler S.D."/>
            <person name="Simonson W.T."/>
            <person name="Sweet I.R."/>
            <person name="Hammerle L.P."/>
        </authorList>
    </citation>
    <scope>CHARACTERIZATION</scope>
    <scope>TISSUE SPECIFICITY</scope>
    <source>
        <tissue>Brain</tissue>
    </source>
</reference>
<reference key="5">
    <citation type="journal article" date="2008" name="J. Neurosci.">
        <title>Unique luminal localization of VGAT-C terminus allows for selective labeling of active cortical GABAergic synapses.</title>
        <authorList>
            <person name="Martens H."/>
            <person name="Weston M.C."/>
            <person name="Boulland J.L."/>
            <person name="Groenborg M."/>
            <person name="Grosche J."/>
            <person name="Kacza J."/>
            <person name="Hoffmann A."/>
            <person name="Matteoli M."/>
            <person name="Takamori S."/>
            <person name="Harkany T."/>
            <person name="Chaudhry F.A."/>
            <person name="Rosenmund C."/>
            <person name="Erck C."/>
            <person name="Jahn R."/>
            <person name="Haertig W."/>
        </authorList>
    </citation>
    <scope>TOPOLOGY</scope>
</reference>
<reference key="6">
    <citation type="journal article" date="2009" name="J. Biol. Chem.">
        <title>Vesicular inhibitory amino acid transporter is a Cl-/gamma-aminobutyrate Co-transporter.</title>
        <authorList>
            <person name="Juge N."/>
            <person name="Muroyama A."/>
            <person name="Hiasa M."/>
            <person name="Omote H."/>
            <person name="Moriyama Y."/>
        </authorList>
    </citation>
    <scope>FUNCTION</scope>
    <scope>BIOPHYSICOCHEMICAL PROPERTIES</scope>
    <scope>CAUTION</scope>
    <scope>MUTAGENESIS OF GLU-213</scope>
</reference>
<reference key="7">
    <citation type="journal article" date="2013" name="J. Neurochem.">
        <title>Vesicular GABA transporter (VGAT) transports beta-alanine.</title>
        <authorList>
            <person name="Juge N."/>
            <person name="Omote H."/>
            <person name="Moriyama Y."/>
        </authorList>
    </citation>
    <scope>FUNCTION</scope>
    <scope>CAUTION</scope>
    <scope>MUTAGENESIS OF GLU-213 AND LYS-351</scope>
    <scope>BIOPHYSICOCHEMICAL PROPERTIES</scope>
    <scope>TRANSPORTER ACTIVITY</scope>
</reference>
<reference key="8">
    <citation type="journal article" date="2012" name="Nat. Commun.">
        <title>Quantitative maps of protein phosphorylation sites across 14 different rat organs and tissues.</title>
        <authorList>
            <person name="Lundby A."/>
            <person name="Secher A."/>
            <person name="Lage K."/>
            <person name="Nordsborg N.B."/>
            <person name="Dmytriyev A."/>
            <person name="Lundby C."/>
            <person name="Olsen J.V."/>
        </authorList>
    </citation>
    <scope>IDENTIFICATION BY MASS SPECTROMETRY [LARGE SCALE ANALYSIS]</scope>
</reference>
<sequence length="525" mass="57407">MATLLRSKLTNVATSVSNKSQAKVSGMFARMGFQAATDEEAVGFAHCDDLDFEHRQGLQMDILKSEGEPCGDEGAEPPVEGDIHYQRGGAPLPPSGSKDQAVGAGGEFGGHDKPKITAWEAGWNVTNAIQGMFVLGLPYAILHGGYLGLFLIIFAAVVCCYTGKILIACLYEENEDGEVVRVRDSYVAIANACCAPRFPTLGGRVVNVAQIIELVMTCILYVVVSGNLMYNSFPGLPVSQKSWSIIATAVLLPCAFLKNLKAVSKFSLLCTLAHFVINILVIAYCLSRARDWAWEKVKFYIDVKKFPISIGIIVFSYTSQIFLPSLEGNMQQPSEFHCMMNWTHIAACVLKGLFALVAYLTWADETKEVITDNLPGSIRAVVNIFLVAKALLSYPLPFFAAVEVLEKSLFQEGSRAFFPACYGGDGRLKSWGLTLRCALVVFTLLMAIYVPHFALLMGLTGSLTGAGLCFLLPSLFHLRLLWRKLLWHQVFFDVAIFVIGGICSVSGFVHSLEGLIEAYRTNAED</sequence>
<keyword id="KW-0966">Cell projection</keyword>
<keyword id="KW-0968">Cytoplasmic vesicle</keyword>
<keyword id="KW-0472">Membrane</keyword>
<keyword id="KW-0532">Neurotransmitter transport</keyword>
<keyword id="KW-0944">Nitration</keyword>
<keyword id="KW-1185">Reference proteome</keyword>
<keyword id="KW-0770">Synapse</keyword>
<keyword id="KW-0812">Transmembrane</keyword>
<keyword id="KW-1133">Transmembrane helix</keyword>
<keyword id="KW-0813">Transport</keyword>
<comment type="function">
    <text evidence="1 6 7">Antiporter that exchanges vesicular protons for cytosolic 4-aminobutanoate or to a lesser extend glycine, thus allowing their secretion from nerve terminals (By similarity) (PubMed:9349821). The transport is equally dependent on the chemical and electrical components of the proton gradient (PubMed:9349821). May also transport beta-alanine (PubMed:23919636). Acidification of GABAergic synaptic vesicles is a prerequisite for 4-aminobutanoate uptake (By similarity).</text>
</comment>
<comment type="catalytic activity">
    <reaction evidence="12">
        <text>beta-alanine(out) + n H(+)(in) = beta-alanine(in) + n H(+)(out)</text>
        <dbReference type="Rhea" id="RHEA:70987"/>
        <dbReference type="ChEBI" id="CHEBI:15378"/>
        <dbReference type="ChEBI" id="CHEBI:57966"/>
    </reaction>
</comment>
<comment type="catalytic activity">
    <reaction evidence="7">
        <text>4-aminobutanoate(out) + n H(+)(in) = 4-aminobutanoate(in) + n H(+)(out)</text>
        <dbReference type="Rhea" id="RHEA:70979"/>
        <dbReference type="ChEBI" id="CHEBI:15378"/>
        <dbReference type="ChEBI" id="CHEBI:59888"/>
    </reaction>
</comment>
<comment type="catalytic activity">
    <reaction evidence="1">
        <text>glycine(out) + n H(+)(in) = glycine(in) + n H(+)(out)</text>
        <dbReference type="Rhea" id="RHEA:70983"/>
        <dbReference type="ChEBI" id="CHEBI:15378"/>
        <dbReference type="ChEBI" id="CHEBI:57305"/>
    </reaction>
</comment>
<comment type="biophysicochemical properties">
    <kinetics>
        <KM evidence="7">5 mM for 4-aminobutanoate</KM>
        <KM evidence="6">3.5 mM for beta-alanine</KM>
        <KM evidence="5">0.8 mM for 4-aminobutanoate</KM>
        <KM evidence="5">2.1 mM for chloride</KM>
        <KM evidence="5">2.3 mM for chloride (for 4-aminobutanoate uptake)</KM>
        <Vmax evidence="6">38.0 nmol/min/mg enzyme toward beta-alanine</Vmax>
        <Vmax evidence="5">41.0 nmol/min/mg enzyme toward 4-aminobutanoate</Vmax>
        <Vmax evidence="5">90.6 nmol/min/mg enzyme toward chloride</Vmax>
        <Vmax evidence="5">7.4 nmol/min/mg enzyme toward chloride (for 4-aminobutanoate uptake)</Vmax>
    </kinetics>
</comment>
<comment type="subcellular location">
    <subcellularLocation>
        <location evidence="3 8">Cytoplasmic vesicle</location>
        <location evidence="3 8">Secretory vesicle</location>
        <location evidence="3 8">Synaptic vesicle membrane</location>
        <topology evidence="2">Multi-pass membrane protein</topology>
    </subcellularLocation>
    <subcellularLocation>
        <location evidence="3">Presynapse</location>
    </subcellularLocation>
    <text evidence="3">Presents in glycine-, GABA- or GABA- and glycine-containing boutons.</text>
</comment>
<comment type="tissue specificity">
    <text evidence="3 4 7 8">Brain (PubMed:9349821, PubMed:9822734). Expressed at high levels within the neocortex, hippocampus, cerebellum, striatum, septal nuclei and the reticular nucleus of the thalamus (PubMed:9349821). Also expressed in islets where it is more abundant in the peripheral/mantle region (PubMed:12031963). Highly expressed in the nerve endings of GABA neurons in the brain and spinal cord but also in glycinergic nerve endings (PubMed:9822734). Expressed in glycine-, GABA- or GABA- and glycine-containing boutons (PubMed:10036231, PubMed:9822734).</text>
</comment>
<comment type="similarity">
    <text evidence="10">Belongs to the amino acid/polyamine transporter 2 family.</text>
</comment>
<comment type="caution">
    <text evidence="1 5 6">Juge et al. shows that SLC32A1 is a symporter of both 4-aminobutanoate or glycine or beta-alanine with Cl(-) that operates according an electrical gradient without the need for a chemical gradient (PubMed:19843525, PubMed:23919636). However Farsi et al. and Egashira et al. confirm that SLC32A1 is an antiporter that exchanges vesicular protons for cytosolic 4-aminobutanoate or glycine and exclude any coupling with chloride (By similarity).</text>
</comment>
<organism>
    <name type="scientific">Rattus norvegicus</name>
    <name type="common">Rat</name>
    <dbReference type="NCBI Taxonomy" id="10116"/>
    <lineage>
        <taxon>Eukaryota</taxon>
        <taxon>Metazoa</taxon>
        <taxon>Chordata</taxon>
        <taxon>Craniata</taxon>
        <taxon>Vertebrata</taxon>
        <taxon>Euteleostomi</taxon>
        <taxon>Mammalia</taxon>
        <taxon>Eutheria</taxon>
        <taxon>Euarchontoglires</taxon>
        <taxon>Glires</taxon>
        <taxon>Rodentia</taxon>
        <taxon>Myomorpha</taxon>
        <taxon>Muroidea</taxon>
        <taxon>Muridae</taxon>
        <taxon>Murinae</taxon>
        <taxon>Rattus</taxon>
    </lineage>
</organism>